<feature type="chain" id="PRO_0000191079" description="ATP-dependent Clp protease ATP-binding subunit ClpA">
    <location>
        <begin position="1"/>
        <end position="758"/>
    </location>
</feature>
<feature type="domain" description="Clp R" evidence="2">
    <location>
        <begin position="1"/>
        <end position="145"/>
    </location>
</feature>
<feature type="region of interest" description="Repeat 1" evidence="2">
    <location>
        <begin position="2"/>
        <end position="65"/>
    </location>
</feature>
<feature type="region of interest" description="Repeat 2" evidence="2">
    <location>
        <begin position="80"/>
        <end position="145"/>
    </location>
</feature>
<feature type="region of interest" description="Disordered" evidence="3">
    <location>
        <begin position="140"/>
        <end position="167"/>
    </location>
</feature>
<feature type="region of interest" description="I">
    <location>
        <begin position="169"/>
        <end position="417"/>
    </location>
</feature>
<feature type="region of interest" description="II">
    <location>
        <begin position="421"/>
        <end position="609"/>
    </location>
</feature>
<feature type="compositionally biased region" description="Polar residues" evidence="3">
    <location>
        <begin position="148"/>
        <end position="161"/>
    </location>
</feature>
<feature type="binding site" evidence="1">
    <location>
        <begin position="214"/>
        <end position="221"/>
    </location>
    <ligand>
        <name>ATP</name>
        <dbReference type="ChEBI" id="CHEBI:30616"/>
    </ligand>
</feature>
<feature type="binding site" evidence="1">
    <location>
        <begin position="495"/>
        <end position="502"/>
    </location>
    <ligand>
        <name>ATP</name>
        <dbReference type="ChEBI" id="CHEBI:30616"/>
    </ligand>
</feature>
<feature type="sequence conflict" description="In Ref. 1; AAA23583." evidence="6" ref="1">
    <original>A</original>
    <variation>G</variation>
    <location>
        <position position="367"/>
    </location>
</feature>
<feature type="sequence conflict" description="In Ref. 1; AAA23583." evidence="6" ref="1">
    <original>L</original>
    <variation>V</variation>
    <location>
        <position position="411"/>
    </location>
</feature>
<feature type="sequence conflict" description="In Ref. 1; AAA23583." evidence="6" ref="1">
    <original>L</original>
    <variation>V</variation>
    <location>
        <position position="533"/>
    </location>
</feature>
<feature type="helix" evidence="7">
    <location>
        <begin position="4"/>
        <end position="20"/>
    </location>
</feature>
<feature type="strand" evidence="7">
    <location>
        <begin position="22"/>
        <end position="25"/>
    </location>
</feature>
<feature type="helix" evidence="7">
    <location>
        <begin position="27"/>
        <end position="34"/>
    </location>
</feature>
<feature type="helix" evidence="7">
    <location>
        <begin position="38"/>
        <end position="46"/>
    </location>
</feature>
<feature type="helix" evidence="7">
    <location>
        <begin position="51"/>
        <end position="65"/>
    </location>
</feature>
<feature type="strand" evidence="9">
    <location>
        <begin position="72"/>
        <end position="74"/>
    </location>
</feature>
<feature type="helix" evidence="7">
    <location>
        <begin position="82"/>
        <end position="96"/>
    </location>
</feature>
<feature type="strand" evidence="7">
    <location>
        <begin position="97"/>
        <end position="99"/>
    </location>
</feature>
<feature type="strand" evidence="9">
    <location>
        <begin position="101"/>
        <end position="103"/>
    </location>
</feature>
<feature type="helix" evidence="7">
    <location>
        <begin position="105"/>
        <end position="112"/>
    </location>
</feature>
<feature type="helix" evidence="7">
    <location>
        <begin position="119"/>
        <end position="126"/>
    </location>
</feature>
<feature type="helix" evidence="7">
    <location>
        <begin position="131"/>
        <end position="139"/>
    </location>
</feature>
<feature type="strand" evidence="9">
    <location>
        <begin position="171"/>
        <end position="173"/>
    </location>
</feature>
<feature type="helix" evidence="9">
    <location>
        <begin position="176"/>
        <end position="181"/>
    </location>
</feature>
<feature type="strand" evidence="10">
    <location>
        <begin position="183"/>
        <end position="185"/>
    </location>
</feature>
<feature type="helix" evidence="9">
    <location>
        <begin position="192"/>
        <end position="202"/>
    </location>
</feature>
<feature type="strand" evidence="9">
    <location>
        <begin position="204"/>
        <end position="207"/>
    </location>
</feature>
<feature type="strand" evidence="9">
    <location>
        <begin position="209"/>
        <end position="213"/>
    </location>
</feature>
<feature type="helix" evidence="9">
    <location>
        <begin position="220"/>
        <end position="233"/>
    </location>
</feature>
<feature type="helix" evidence="9">
    <location>
        <begin position="238"/>
        <end position="240"/>
    </location>
</feature>
<feature type="strand" evidence="9">
    <location>
        <begin position="244"/>
        <end position="247"/>
    </location>
</feature>
<feature type="helix" evidence="12">
    <location>
        <begin position="250"/>
        <end position="254"/>
    </location>
</feature>
<feature type="strand" evidence="8">
    <location>
        <begin position="259"/>
        <end position="261"/>
    </location>
</feature>
<feature type="helix" evidence="9">
    <location>
        <begin position="263"/>
        <end position="274"/>
    </location>
</feature>
<feature type="strand" evidence="9">
    <location>
        <begin position="275"/>
        <end position="278"/>
    </location>
</feature>
<feature type="strand" evidence="9">
    <location>
        <begin position="280"/>
        <end position="284"/>
    </location>
</feature>
<feature type="turn" evidence="9">
    <location>
        <begin position="285"/>
        <end position="292"/>
    </location>
</feature>
<feature type="turn" evidence="15">
    <location>
        <begin position="293"/>
        <end position="295"/>
    </location>
</feature>
<feature type="strand" evidence="9">
    <location>
        <begin position="296"/>
        <end position="298"/>
    </location>
</feature>
<feature type="helix" evidence="9">
    <location>
        <begin position="300"/>
        <end position="307"/>
    </location>
</feature>
<feature type="strand" evidence="9">
    <location>
        <begin position="311"/>
        <end position="313"/>
    </location>
</feature>
<feature type="strand" evidence="9">
    <location>
        <begin position="317"/>
        <end position="322"/>
    </location>
</feature>
<feature type="helix" evidence="9">
    <location>
        <begin position="324"/>
        <end position="328"/>
    </location>
</feature>
<feature type="helix" evidence="9">
    <location>
        <begin position="329"/>
        <end position="333"/>
    </location>
</feature>
<feature type="helix" evidence="11">
    <location>
        <begin position="335"/>
        <end position="337"/>
    </location>
</feature>
<feature type="helix" evidence="9">
    <location>
        <begin position="338"/>
        <end position="340"/>
    </location>
</feature>
<feature type="strand" evidence="9">
    <location>
        <begin position="341"/>
        <end position="345"/>
    </location>
</feature>
<feature type="helix" evidence="9">
    <location>
        <begin position="351"/>
        <end position="369"/>
    </location>
</feature>
<feature type="helix" evidence="9">
    <location>
        <begin position="375"/>
        <end position="388"/>
    </location>
</feature>
<feature type="helix" evidence="9">
    <location>
        <begin position="396"/>
        <end position="411"/>
    </location>
</feature>
<feature type="strand" evidence="9">
    <location>
        <begin position="412"/>
        <end position="414"/>
    </location>
</feature>
<feature type="strand" evidence="12">
    <location>
        <begin position="419"/>
        <end position="421"/>
    </location>
</feature>
<feature type="helix" evidence="9">
    <location>
        <begin position="423"/>
        <end position="433"/>
    </location>
</feature>
<feature type="strand" evidence="15">
    <location>
        <begin position="436"/>
        <end position="438"/>
    </location>
</feature>
<feature type="strand" evidence="9">
    <location>
        <begin position="441"/>
        <end position="444"/>
    </location>
</feature>
<feature type="helix" evidence="9">
    <location>
        <begin position="445"/>
        <end position="456"/>
    </location>
</feature>
<feature type="turn" evidence="9">
    <location>
        <begin position="457"/>
        <end position="459"/>
    </location>
</feature>
<feature type="helix" evidence="9">
    <location>
        <begin position="464"/>
        <end position="478"/>
    </location>
</feature>
<feature type="turn" evidence="13">
    <location>
        <begin position="479"/>
        <end position="481"/>
    </location>
</feature>
<feature type="strand" evidence="8">
    <location>
        <begin position="484"/>
        <end position="486"/>
    </location>
</feature>
<feature type="strand" evidence="9">
    <location>
        <begin position="488"/>
        <end position="494"/>
    </location>
</feature>
<feature type="strand" evidence="11">
    <location>
        <begin position="497"/>
        <end position="500"/>
    </location>
</feature>
<feature type="helix" evidence="9">
    <location>
        <begin position="501"/>
        <end position="512"/>
    </location>
</feature>
<feature type="strand" evidence="9">
    <location>
        <begin position="515"/>
        <end position="520"/>
    </location>
</feature>
<feature type="helix" evidence="9">
    <location>
        <begin position="521"/>
        <end position="523"/>
    </location>
</feature>
<feature type="strand" evidence="9">
    <location>
        <begin position="525"/>
        <end position="528"/>
    </location>
</feature>
<feature type="strand" evidence="9">
    <location>
        <begin position="531"/>
        <end position="533"/>
    </location>
</feature>
<feature type="strand" evidence="14">
    <location>
        <begin position="534"/>
        <end position="536"/>
    </location>
</feature>
<feature type="strand" evidence="16">
    <location>
        <begin position="538"/>
        <end position="540"/>
    </location>
</feature>
<feature type="helix" evidence="9">
    <location>
        <begin position="541"/>
        <end position="545"/>
    </location>
</feature>
<feature type="helix" evidence="9">
    <location>
        <begin position="548"/>
        <end position="555"/>
    </location>
</feature>
<feature type="strand" evidence="9">
    <location>
        <begin position="557"/>
        <end position="564"/>
    </location>
</feature>
<feature type="helix" evidence="9">
    <location>
        <begin position="566"/>
        <end position="568"/>
    </location>
</feature>
<feature type="helix" evidence="9">
    <location>
        <begin position="571"/>
        <end position="583"/>
    </location>
</feature>
<feature type="strand" evidence="9">
    <location>
        <begin position="584"/>
        <end position="588"/>
    </location>
</feature>
<feature type="turn" evidence="9">
    <location>
        <begin position="589"/>
        <end position="591"/>
    </location>
</feature>
<feature type="strand" evidence="9">
    <location>
        <begin position="592"/>
        <end position="595"/>
    </location>
</feature>
<feature type="strand" evidence="9">
    <location>
        <begin position="599"/>
        <end position="605"/>
    </location>
</feature>
<feature type="turn" evidence="12">
    <location>
        <begin position="607"/>
        <end position="609"/>
    </location>
</feature>
<feature type="helix" evidence="12">
    <location>
        <begin position="610"/>
        <end position="612"/>
    </location>
</feature>
<feature type="strand" evidence="12">
    <location>
        <begin position="617"/>
        <end position="620"/>
    </location>
</feature>
<feature type="helix" evidence="9">
    <location>
        <begin position="629"/>
        <end position="635"/>
    </location>
</feature>
<feature type="helix" evidence="9">
    <location>
        <begin position="638"/>
        <end position="641"/>
    </location>
</feature>
<feature type="strand" evidence="9">
    <location>
        <begin position="645"/>
        <end position="649"/>
    </location>
</feature>
<feature type="helix" evidence="9">
    <location>
        <begin position="655"/>
        <end position="675"/>
    </location>
</feature>
<feature type="strand" evidence="9">
    <location>
        <begin position="678"/>
        <end position="682"/>
    </location>
</feature>
<feature type="helix" evidence="9">
    <location>
        <begin position="684"/>
        <end position="694"/>
    </location>
</feature>
<feature type="turn" evidence="9">
    <location>
        <begin position="697"/>
        <end position="699"/>
    </location>
</feature>
<feature type="turn" evidence="9">
    <location>
        <begin position="701"/>
        <end position="703"/>
    </location>
</feature>
<feature type="helix" evidence="9">
    <location>
        <begin position="704"/>
        <end position="712"/>
    </location>
</feature>
<feature type="helix" evidence="9">
    <location>
        <begin position="714"/>
        <end position="716"/>
    </location>
</feature>
<feature type="helix" evidence="9">
    <location>
        <begin position="717"/>
        <end position="722"/>
    </location>
</feature>
<feature type="turn" evidence="9">
    <location>
        <begin position="724"/>
        <end position="727"/>
    </location>
</feature>
<feature type="strand" evidence="9">
    <location>
        <begin position="729"/>
        <end position="736"/>
    </location>
</feature>
<feature type="turn" evidence="9">
    <location>
        <begin position="737"/>
        <end position="740"/>
    </location>
</feature>
<feature type="strand" evidence="9">
    <location>
        <begin position="741"/>
        <end position="748"/>
    </location>
</feature>
<feature type="strand" evidence="8">
    <location>
        <begin position="750"/>
        <end position="752"/>
    </location>
</feature>
<accession>P0ABH9</accession>
<accession>P15716</accession>
<accession>P77686</accession>
<reference key="1">
    <citation type="journal article" date="1990" name="J. Biol. Chem.">
        <title>The ATP-dependent Clp protease of Escherichia coli. Sequence of clpA and identification of a Clp-specific substrate.</title>
        <authorList>
            <person name="Gottesman S."/>
            <person name="Clark W.P."/>
            <person name="Maurizi M.R."/>
        </authorList>
    </citation>
    <scope>NUCLEOTIDE SEQUENCE [GENOMIC DNA]</scope>
    <source>
        <strain>K12</strain>
    </source>
</reference>
<reference key="2">
    <citation type="journal article" date="1996" name="DNA Res.">
        <title>A 718-kb DNA sequence of the Escherichia coli K-12 genome corresponding to the 12.7-28.0 min region on the linkage map.</title>
        <authorList>
            <person name="Oshima T."/>
            <person name="Aiba H."/>
            <person name="Baba T."/>
            <person name="Fujita K."/>
            <person name="Hayashi K."/>
            <person name="Honjo A."/>
            <person name="Ikemoto K."/>
            <person name="Inada T."/>
            <person name="Itoh T."/>
            <person name="Kajihara M."/>
            <person name="Kanai K."/>
            <person name="Kashimoto K."/>
            <person name="Kimura S."/>
            <person name="Kitagawa M."/>
            <person name="Makino K."/>
            <person name="Masuda S."/>
            <person name="Miki T."/>
            <person name="Mizobuchi K."/>
            <person name="Mori H."/>
            <person name="Motomura K."/>
            <person name="Nakamura Y."/>
            <person name="Nashimoto H."/>
            <person name="Nishio Y."/>
            <person name="Saito N."/>
            <person name="Sampei G."/>
            <person name="Seki Y."/>
            <person name="Tagami H."/>
            <person name="Takemoto K."/>
            <person name="Wada C."/>
            <person name="Yamamoto Y."/>
            <person name="Yano M."/>
            <person name="Horiuchi T."/>
        </authorList>
    </citation>
    <scope>NUCLEOTIDE SEQUENCE [LARGE SCALE GENOMIC DNA]</scope>
    <source>
        <strain>K12 / W3110 / ATCC 27325 / DSM 5911</strain>
    </source>
</reference>
<reference key="3">
    <citation type="journal article" date="1997" name="Science">
        <title>The complete genome sequence of Escherichia coli K-12.</title>
        <authorList>
            <person name="Blattner F.R."/>
            <person name="Plunkett G. III"/>
            <person name="Bloch C.A."/>
            <person name="Perna N.T."/>
            <person name="Burland V."/>
            <person name="Riley M."/>
            <person name="Collado-Vides J."/>
            <person name="Glasner J.D."/>
            <person name="Rode C.K."/>
            <person name="Mayhew G.F."/>
            <person name="Gregor J."/>
            <person name="Davis N.W."/>
            <person name="Kirkpatrick H.A."/>
            <person name="Goeden M.A."/>
            <person name="Rose D.J."/>
            <person name="Mau B."/>
            <person name="Shao Y."/>
        </authorList>
    </citation>
    <scope>NUCLEOTIDE SEQUENCE [LARGE SCALE GENOMIC DNA]</scope>
    <source>
        <strain>K12 / MG1655 / ATCC 47076</strain>
    </source>
</reference>
<reference key="4">
    <citation type="journal article" date="2006" name="Mol. Syst. Biol.">
        <title>Highly accurate genome sequences of Escherichia coli K-12 strains MG1655 and W3110.</title>
        <authorList>
            <person name="Hayashi K."/>
            <person name="Morooka N."/>
            <person name="Yamamoto Y."/>
            <person name="Fujita K."/>
            <person name="Isono K."/>
            <person name="Choi S."/>
            <person name="Ohtsubo E."/>
            <person name="Baba T."/>
            <person name="Wanner B.L."/>
            <person name="Mori H."/>
            <person name="Horiuchi T."/>
        </authorList>
    </citation>
    <scope>NUCLEOTIDE SEQUENCE [LARGE SCALE GENOMIC DNA]</scope>
    <source>
        <strain>K12 / W3110 / ATCC 27325 / DSM 5911</strain>
    </source>
</reference>
<reference key="5">
    <citation type="journal article" date="1988" name="J. Biol. Chem.">
        <title>The two-component, ATP-dependent Clp protease of Escherichia coli. Purification, cloning, and mutational analysis of the ATP-binding component.</title>
        <authorList>
            <person name="Katayama Y."/>
            <person name="Gottesman S."/>
            <person name="Pumphrey J."/>
            <person name="Rudikoff S."/>
            <person name="Clark W.P."/>
            <person name="Maurizi M.R."/>
        </authorList>
    </citation>
    <scope>NUCLEOTIDE SEQUENCE [GENOMIC DNA] OF 1-28</scope>
    <scope>PARTIAL PROTEIN SEQUENCE</scope>
    <source>
        <strain>SG1110</strain>
    </source>
</reference>
<reference key="6">
    <citation type="journal article" date="1991" name="J. Biol. Chem.">
        <title>Structure and expression of the infA operon encoding translational initiation factor IF1. Transcriptional control by growth rate.</title>
        <authorList>
            <person name="Cummings H.S."/>
            <person name="Sands J.F."/>
            <person name="Foreman P.C."/>
            <person name="Fraser J."/>
            <person name="Hershey J.W.B."/>
        </authorList>
    </citation>
    <scope>NUCLEOTIDE SEQUENCE [GENOMIC DNA] OF 511-758</scope>
</reference>
<reference key="7">
    <citation type="journal article" date="1990" name="Proc. Natl. Acad. Sci. U.S.A.">
        <title>Conservation of the regulatory subunit for the Clp ATP-dependent protease in prokaryotes and eukaryotes.</title>
        <authorList>
            <person name="Gottesman S."/>
            <person name="Squires C."/>
            <person name="Pichersky E."/>
            <person name="Carrington M."/>
            <person name="Hobbs M."/>
            <person name="Mattick J.S."/>
            <person name="Dalrymple B."/>
            <person name="Kuramitsu H."/>
            <person name="Shiroza T."/>
            <person name="Foster T."/>
            <person name="Clark W.P."/>
            <person name="Ross B."/>
            <person name="Squires C.L."/>
            <person name="Maurizi M.R."/>
        </authorList>
    </citation>
    <scope>SIMILARITY TO OTHER CLPAB LIKE PROTEINS</scope>
</reference>
<reference key="8">
    <citation type="journal article" date="2002" name="J. Biol. Chem.">
        <title>Crystal structure of ClpA, an Hsp100 chaperone and regulator of ClpAP protease.</title>
        <authorList>
            <person name="Guo F."/>
            <person name="Maurizi M.R."/>
            <person name="Esser L."/>
            <person name="Xia D."/>
        </authorList>
    </citation>
    <scope>X-RAY CRYSTALLOGRAPHY (1.8 ANGSTROMS) OF 1-143</scope>
</reference>
<reference key="9">
    <citation type="journal article" date="2002" name="Nat. Struct. Biol.">
        <title>Structural analysis of the adaptor protein ClpS in complex with the N-terminal domain of ClpA.</title>
        <authorList>
            <person name="Zeth K."/>
            <person name="Ravelli R.B."/>
            <person name="Paal K."/>
            <person name="Cusack S."/>
            <person name="Bukau B."/>
            <person name="Dougan D.A."/>
        </authorList>
    </citation>
    <scope>X-RAY CRYSTALLOGRAPHY (2.5 ANGSTROMS) OF 1-146 IN COMPLEX WITH CLPS</scope>
</reference>
<reference key="10">
    <citation type="journal article" date="2002" name="J. Biol. Chem.">
        <title>Crystal structure of the heterodimeric complex of the adaptor, ClpS, with the N-domain of the AAA+ chaperone, ClpA.</title>
        <authorList>
            <person name="Guo F."/>
            <person name="Esser L."/>
            <person name="Singh S.K."/>
            <person name="Maurizi M.R."/>
            <person name="Xia D."/>
        </authorList>
    </citation>
    <scope>X-RAY CRYSTALLOGRAPHY (2.25 ANGSTROMS) OF 1-143 IN COMPLEX WITH CLPS</scope>
</reference>
<evidence type="ECO:0000255" key="1"/>
<evidence type="ECO:0000255" key="2">
    <source>
        <dbReference type="PROSITE-ProRule" id="PRU01251"/>
    </source>
</evidence>
<evidence type="ECO:0000256" key="3">
    <source>
        <dbReference type="SAM" id="MobiDB-lite"/>
    </source>
</evidence>
<evidence type="ECO:0000269" key="4">
    <source>
    </source>
</evidence>
<evidence type="ECO:0000269" key="5">
    <source>
    </source>
</evidence>
<evidence type="ECO:0000305" key="6"/>
<evidence type="ECO:0007829" key="7">
    <source>
        <dbReference type="PDB" id="1K6K"/>
    </source>
</evidence>
<evidence type="ECO:0007829" key="8">
    <source>
        <dbReference type="PDB" id="1KSF"/>
    </source>
</evidence>
<evidence type="ECO:0007829" key="9">
    <source>
        <dbReference type="PDB" id="1R6B"/>
    </source>
</evidence>
<evidence type="ECO:0007829" key="10">
    <source>
        <dbReference type="PDB" id="6UQE"/>
    </source>
</evidence>
<evidence type="ECO:0007829" key="11">
    <source>
        <dbReference type="PDB" id="6UQO"/>
    </source>
</evidence>
<evidence type="ECO:0007829" key="12">
    <source>
        <dbReference type="PDB" id="6W1Z"/>
    </source>
</evidence>
<evidence type="ECO:0007829" key="13">
    <source>
        <dbReference type="PDB" id="6W20"/>
    </source>
</evidence>
<evidence type="ECO:0007829" key="14">
    <source>
        <dbReference type="PDB" id="7UIV"/>
    </source>
</evidence>
<evidence type="ECO:0007829" key="15">
    <source>
        <dbReference type="PDB" id="7UIX"/>
    </source>
</evidence>
<evidence type="ECO:0007829" key="16">
    <source>
        <dbReference type="PDB" id="7UIZ"/>
    </source>
</evidence>
<sequence length="758" mass="84207">MLNQELELSLNMAFARAREHRHEFMTVEHLLLALLSNPSAREALEACSVDLVALRQELEAFIEQTTPVLPASEEERDTQPTLSFQRVLQRAVFHVQSSGRNEVTGANVLVAIFSEQESQAAYLLRKHEVSRLDVVNFISHGTRKDEPTQSSDPGSQPNSEEQAGGEERMENFTTNLNQLARVGGIDPLIGREKELERAIQVLCRRRKNNPLLVGESGVGKTAIAEGLAWRIVQGDVPEVMADCTIYSLDIGSLLAGTKYRGDFEKRFKALLKQLEQDTNSILFIDEIHTIIGAGAASGGQVDAANLIKPLLSSGKIRVIGSTTYQEFSNIFEKDRALARRFQKIDITEPSIEETVQIINGLKPKYEAHHDVRYTAKAVRAAVELAVKYINDRHLPDKAIDVIDEAGARARLMPVSKRKKTVNVADIESVVARIARIPEKSVSQSDRDTLKNLGDRLKMLVFGQDKAIEALTEAIKMARAGLGHEHKPVGSFLFAGPTGVGKTEVTVQLSKALGIELLRFDMSEYMERHTVSRLIGAPPGYVGFDQGGLLTDAVIKHPHAVLLLDEIEKAHPDVFNILLQVMDNGTLTDNNGRKADFRNVVLVMTTNAGVRETERKSIGLIHQDNSTDAMEEIKKIFTPEFRNRLDNIIWFDHLSTDVIHQVVDKFIVELQVQLDQKGVSLEVSQEARNWLAEKGYDRAMGARPMARVIQDNLKKPLANELLFGSLVDGGQVTVALDKEKNELTYGFQSAQKHKAEAAH</sequence>
<protein>
    <recommendedName>
        <fullName>ATP-dependent Clp protease ATP-binding subunit ClpA</fullName>
    </recommendedName>
</protein>
<gene>
    <name type="primary">clpA</name>
    <name type="synonym">lopD</name>
    <name type="ordered locus">b0882</name>
    <name type="ordered locus">JW0866</name>
</gene>
<proteinExistence type="evidence at protein level"/>
<dbReference type="EMBL" id="M31045">
    <property type="protein sequence ID" value="AAA23583.1"/>
    <property type="molecule type" value="Genomic_DNA"/>
</dbReference>
<dbReference type="EMBL" id="U00096">
    <property type="protein sequence ID" value="AAC73969.1"/>
    <property type="molecule type" value="Genomic_DNA"/>
</dbReference>
<dbReference type="EMBL" id="AP009048">
    <property type="protein sequence ID" value="BAA35601.1"/>
    <property type="molecule type" value="Genomic_DNA"/>
</dbReference>
<dbReference type="EMBL" id="M23220">
    <property type="protein sequence ID" value="AAA23582.1"/>
    <property type="molecule type" value="Genomic_DNA"/>
</dbReference>
<dbReference type="PIR" id="B64827">
    <property type="entry name" value="SUECCA"/>
</dbReference>
<dbReference type="RefSeq" id="NP_415403.1">
    <property type="nucleotide sequence ID" value="NC_000913.3"/>
</dbReference>
<dbReference type="RefSeq" id="WP_000934041.1">
    <property type="nucleotide sequence ID" value="NZ_STEB01000006.1"/>
</dbReference>
<dbReference type="PDB" id="1K6K">
    <property type="method" value="X-ray"/>
    <property type="resolution" value="1.80 A"/>
    <property type="chains" value="A=1-143"/>
</dbReference>
<dbReference type="PDB" id="1KSF">
    <property type="method" value="X-ray"/>
    <property type="resolution" value="2.60 A"/>
    <property type="chains" value="X=1-758"/>
</dbReference>
<dbReference type="PDB" id="1LZW">
    <property type="method" value="X-ray"/>
    <property type="resolution" value="2.50 A"/>
    <property type="chains" value="B=1-146"/>
</dbReference>
<dbReference type="PDB" id="1MBU">
    <property type="method" value="X-ray"/>
    <property type="resolution" value="2.30 A"/>
    <property type="chains" value="A/B=1-142"/>
</dbReference>
<dbReference type="PDB" id="1MBV">
    <property type="method" value="X-ray"/>
    <property type="resolution" value="3.30 A"/>
    <property type="chains" value="A=1-142"/>
</dbReference>
<dbReference type="PDB" id="1MBX">
    <property type="method" value="X-ray"/>
    <property type="resolution" value="2.25 A"/>
    <property type="chains" value="A/B=1-142"/>
</dbReference>
<dbReference type="PDB" id="1MG9">
    <property type="method" value="X-ray"/>
    <property type="resolution" value="2.30 A"/>
    <property type="chains" value="B=1-146"/>
</dbReference>
<dbReference type="PDB" id="1R6B">
    <property type="method" value="X-ray"/>
    <property type="resolution" value="2.25 A"/>
    <property type="chains" value="X=1-758"/>
</dbReference>
<dbReference type="PDB" id="1R6C">
    <property type="method" value="X-ray"/>
    <property type="resolution" value="2.15 A"/>
    <property type="chains" value="X=1-143"/>
</dbReference>
<dbReference type="PDB" id="1R6O">
    <property type="method" value="X-ray"/>
    <property type="resolution" value="2.25 A"/>
    <property type="chains" value="A/B=1-143"/>
</dbReference>
<dbReference type="PDB" id="1R6Q">
    <property type="method" value="X-ray"/>
    <property type="resolution" value="2.35 A"/>
    <property type="chains" value="A/B=1-143"/>
</dbReference>
<dbReference type="PDB" id="5OFO">
    <property type="method" value="EM"/>
    <property type="resolution" value="4.60 A"/>
    <property type="chains" value="A/B/C/D/E/F=609-635"/>
</dbReference>
<dbReference type="PDB" id="5OG1">
    <property type="method" value="EM"/>
    <property type="resolution" value="4.50 A"/>
    <property type="chains" value="A/B/C/D/E/F=609-635"/>
</dbReference>
<dbReference type="PDB" id="6UQE">
    <property type="method" value="EM"/>
    <property type="resolution" value="3.00 A"/>
    <property type="chains" value="A/B/C/D/E/F=169-746"/>
</dbReference>
<dbReference type="PDB" id="6UQO">
    <property type="method" value="EM"/>
    <property type="resolution" value="3.10 A"/>
    <property type="chains" value="A/B/C/D/E/F=169-746"/>
</dbReference>
<dbReference type="PDB" id="6W1Z">
    <property type="method" value="EM"/>
    <property type="resolution" value="2.70 A"/>
    <property type="chains" value="A/B/C/D/E/F=1-758"/>
</dbReference>
<dbReference type="PDB" id="6W20">
    <property type="method" value="EM"/>
    <property type="resolution" value="3.00 A"/>
    <property type="chains" value="A/B/C/D/E/F=1-758"/>
</dbReference>
<dbReference type="PDB" id="6W21">
    <property type="method" value="EM"/>
    <property type="resolution" value="3.30 A"/>
    <property type="chains" value="A/B/C/D/E/F=1-758"/>
</dbReference>
<dbReference type="PDB" id="6W22">
    <property type="method" value="EM"/>
    <property type="resolution" value="3.00 A"/>
    <property type="chains" value="A/B/C/D/E/F=1-758"/>
</dbReference>
<dbReference type="PDB" id="6W23">
    <property type="method" value="EM"/>
    <property type="resolution" value="3.10 A"/>
    <property type="chains" value="A/B/C/D/E/F=1-758"/>
</dbReference>
<dbReference type="PDB" id="6W24">
    <property type="method" value="EM"/>
    <property type="resolution" value="3.40 A"/>
    <property type="chains" value="A/B/C/D/E/F=1-758"/>
</dbReference>
<dbReference type="PDB" id="7UIV">
    <property type="method" value="EM"/>
    <property type="resolution" value="3.38 A"/>
    <property type="chains" value="A/B/C/D/E/F=1-758"/>
</dbReference>
<dbReference type="PDB" id="7UIW">
    <property type="method" value="EM"/>
    <property type="resolution" value="3.33 A"/>
    <property type="chains" value="A/B/C/D/E/F=1-758"/>
</dbReference>
<dbReference type="PDB" id="7UIX">
    <property type="method" value="EM"/>
    <property type="resolution" value="3.24 A"/>
    <property type="chains" value="A/B/C/D/E/F=1-758"/>
</dbReference>
<dbReference type="PDB" id="7UIY">
    <property type="method" value="EM"/>
    <property type="resolution" value="3.22 A"/>
    <property type="chains" value="A/B/C/D/E/F=1-758"/>
</dbReference>
<dbReference type="PDB" id="7UIZ">
    <property type="method" value="EM"/>
    <property type="resolution" value="3.24 A"/>
    <property type="chains" value="A/B/C/D/E/F=1-758"/>
</dbReference>
<dbReference type="PDB" id="7UJ0">
    <property type="method" value="EM"/>
    <property type="resolution" value="3.26 A"/>
    <property type="chains" value="A/B/C/D/E/F=1-758"/>
</dbReference>
<dbReference type="PDBsum" id="1K6K"/>
<dbReference type="PDBsum" id="1KSF"/>
<dbReference type="PDBsum" id="1LZW"/>
<dbReference type="PDBsum" id="1MBU"/>
<dbReference type="PDBsum" id="1MBV"/>
<dbReference type="PDBsum" id="1MBX"/>
<dbReference type="PDBsum" id="1MG9"/>
<dbReference type="PDBsum" id="1R6B"/>
<dbReference type="PDBsum" id="1R6C"/>
<dbReference type="PDBsum" id="1R6O"/>
<dbReference type="PDBsum" id="1R6Q"/>
<dbReference type="PDBsum" id="5OFO"/>
<dbReference type="PDBsum" id="5OG1"/>
<dbReference type="PDBsum" id="6UQE"/>
<dbReference type="PDBsum" id="6UQO"/>
<dbReference type="PDBsum" id="6W1Z"/>
<dbReference type="PDBsum" id="6W20"/>
<dbReference type="PDBsum" id="6W21"/>
<dbReference type="PDBsum" id="6W22"/>
<dbReference type="PDBsum" id="6W23"/>
<dbReference type="PDBsum" id="6W24"/>
<dbReference type="PDBsum" id="7UIV"/>
<dbReference type="PDBsum" id="7UIW"/>
<dbReference type="PDBsum" id="7UIX"/>
<dbReference type="PDBsum" id="7UIY"/>
<dbReference type="PDBsum" id="7UIZ"/>
<dbReference type="PDBsum" id="7UJ0"/>
<dbReference type="EMDB" id="EMD-21519"/>
<dbReference type="EMDB" id="EMD-21520"/>
<dbReference type="EMDB" id="EMD-21521"/>
<dbReference type="EMDB" id="EMD-21522"/>
<dbReference type="EMDB" id="EMD-21523"/>
<dbReference type="EMDB" id="EMD-21524"/>
<dbReference type="SMR" id="P0ABH9"/>
<dbReference type="BioGRID" id="4261320">
    <property type="interactions" value="466"/>
</dbReference>
<dbReference type="BioGRID" id="850131">
    <property type="interactions" value="5"/>
</dbReference>
<dbReference type="ComplexPortal" id="CPX-3175">
    <property type="entry name" value="Endopeptidase ClpAP complex"/>
</dbReference>
<dbReference type="DIP" id="DIP-35409N"/>
<dbReference type="FunCoup" id="P0ABH9">
    <property type="interactions" value="357"/>
</dbReference>
<dbReference type="IntAct" id="P0ABH9">
    <property type="interactions" value="77"/>
</dbReference>
<dbReference type="MINT" id="P0ABH9"/>
<dbReference type="STRING" id="511145.b0882"/>
<dbReference type="MEROPS" id="X20.001"/>
<dbReference type="jPOST" id="P0ABH9"/>
<dbReference type="PaxDb" id="511145-b0882"/>
<dbReference type="EnsemblBacteria" id="AAC73969">
    <property type="protein sequence ID" value="AAC73969"/>
    <property type="gene ID" value="b0882"/>
</dbReference>
<dbReference type="GeneID" id="93776538"/>
<dbReference type="GeneID" id="945764"/>
<dbReference type="KEGG" id="ecj:JW0866"/>
<dbReference type="KEGG" id="eco:b0882"/>
<dbReference type="KEGG" id="ecoc:C3026_05475"/>
<dbReference type="PATRIC" id="fig|1411691.4.peg.1395"/>
<dbReference type="EchoBASE" id="EB0154"/>
<dbReference type="eggNOG" id="COG0542">
    <property type="taxonomic scope" value="Bacteria"/>
</dbReference>
<dbReference type="HOGENOM" id="CLU_005070_4_2_6"/>
<dbReference type="InParanoid" id="P0ABH9"/>
<dbReference type="OMA" id="YDKSMGA"/>
<dbReference type="OrthoDB" id="9803641at2"/>
<dbReference type="PhylomeDB" id="P0ABH9"/>
<dbReference type="BioCyc" id="EcoCyc:EG10156-MONOMER"/>
<dbReference type="BioCyc" id="MetaCyc:EG10156-MONOMER"/>
<dbReference type="SABIO-RK" id="P0ABH9"/>
<dbReference type="EvolutionaryTrace" id="P0ABH9"/>
<dbReference type="PRO" id="PR:P0ABH9"/>
<dbReference type="Proteomes" id="UP000000625">
    <property type="component" value="Chromosome"/>
</dbReference>
<dbReference type="GO" id="GO:0005737">
    <property type="term" value="C:cytoplasm"/>
    <property type="evidence" value="ECO:0000318"/>
    <property type="project" value="GO_Central"/>
</dbReference>
<dbReference type="GO" id="GO:0005829">
    <property type="term" value="C:cytosol"/>
    <property type="evidence" value="ECO:0000314"/>
    <property type="project" value="EcoCyc"/>
</dbReference>
<dbReference type="GO" id="GO:0009368">
    <property type="term" value="C:endopeptidase Clp complex"/>
    <property type="evidence" value="ECO:0000353"/>
    <property type="project" value="ComplexPortal"/>
</dbReference>
<dbReference type="GO" id="GO:0005524">
    <property type="term" value="F:ATP binding"/>
    <property type="evidence" value="ECO:0000314"/>
    <property type="project" value="EcoCyc"/>
</dbReference>
<dbReference type="GO" id="GO:0016887">
    <property type="term" value="F:ATP hydrolysis activity"/>
    <property type="evidence" value="ECO:0000314"/>
    <property type="project" value="EcoCyc"/>
</dbReference>
<dbReference type="GO" id="GO:0004176">
    <property type="term" value="F:ATP-dependent peptidase activity"/>
    <property type="evidence" value="ECO:0000314"/>
    <property type="project" value="CACAO"/>
</dbReference>
<dbReference type="GO" id="GO:0034605">
    <property type="term" value="P:cellular response to heat"/>
    <property type="evidence" value="ECO:0000318"/>
    <property type="project" value="GO_Central"/>
</dbReference>
<dbReference type="GO" id="GO:0006515">
    <property type="term" value="P:protein quality control for misfolded or incompletely synthesized proteins"/>
    <property type="evidence" value="ECO:0000303"/>
    <property type="project" value="ComplexPortal"/>
</dbReference>
<dbReference type="GO" id="GO:0043335">
    <property type="term" value="P:protein unfolding"/>
    <property type="evidence" value="ECO:0000315"/>
    <property type="project" value="EcoCyc"/>
</dbReference>
<dbReference type="GO" id="GO:0006508">
    <property type="term" value="P:proteolysis"/>
    <property type="evidence" value="ECO:0000269"/>
    <property type="project" value="EcoCyc"/>
</dbReference>
<dbReference type="GO" id="GO:0006979">
    <property type="term" value="P:response to oxidative stress"/>
    <property type="evidence" value="ECO:0000315"/>
    <property type="project" value="EcoCyc"/>
</dbReference>
<dbReference type="CDD" id="cd00009">
    <property type="entry name" value="AAA"/>
    <property type="match status" value="1"/>
</dbReference>
<dbReference type="CDD" id="cd19499">
    <property type="entry name" value="RecA-like_ClpB_Hsp104-like"/>
    <property type="match status" value="1"/>
</dbReference>
<dbReference type="FunFam" id="1.10.8.60:FF:000011">
    <property type="entry name" value="ATP-dependent Clp protease ATP-binding subunit"/>
    <property type="match status" value="1"/>
</dbReference>
<dbReference type="FunFam" id="1.10.1780.10:FF:000002">
    <property type="entry name" value="ATP-dependent Clp protease ATP-binding subunit ClpA"/>
    <property type="match status" value="1"/>
</dbReference>
<dbReference type="FunFam" id="3.40.50.300:FF:000271">
    <property type="entry name" value="ATP-dependent Clp protease ATP-binding subunit ClpA"/>
    <property type="match status" value="1"/>
</dbReference>
<dbReference type="FunFam" id="3.40.50.300:FF:000268">
    <property type="entry name" value="ATP-dependent Clp protease, ATP-binding subunit ClpA"/>
    <property type="match status" value="1"/>
</dbReference>
<dbReference type="Gene3D" id="1.10.8.60">
    <property type="match status" value="2"/>
</dbReference>
<dbReference type="Gene3D" id="1.10.1780.10">
    <property type="entry name" value="Clp, N-terminal domain"/>
    <property type="match status" value="1"/>
</dbReference>
<dbReference type="Gene3D" id="3.40.50.300">
    <property type="entry name" value="P-loop containing nucleotide triphosphate hydrolases"/>
    <property type="match status" value="2"/>
</dbReference>
<dbReference type="InterPro" id="IPR003593">
    <property type="entry name" value="AAA+_ATPase"/>
</dbReference>
<dbReference type="InterPro" id="IPR003959">
    <property type="entry name" value="ATPase_AAA_core"/>
</dbReference>
<dbReference type="InterPro" id="IPR019489">
    <property type="entry name" value="Clp_ATPase_C"/>
</dbReference>
<dbReference type="InterPro" id="IPR036628">
    <property type="entry name" value="Clp_N_dom_sf"/>
</dbReference>
<dbReference type="InterPro" id="IPR004176">
    <property type="entry name" value="Clp_R_dom"/>
</dbReference>
<dbReference type="InterPro" id="IPR013461">
    <property type="entry name" value="ClpA"/>
</dbReference>
<dbReference type="InterPro" id="IPR001270">
    <property type="entry name" value="ClpA/B"/>
</dbReference>
<dbReference type="InterPro" id="IPR018368">
    <property type="entry name" value="ClpA/B_CS1"/>
</dbReference>
<dbReference type="InterPro" id="IPR028299">
    <property type="entry name" value="ClpA/B_CS2"/>
</dbReference>
<dbReference type="InterPro" id="IPR041546">
    <property type="entry name" value="ClpA/ClpB_AAA_lid"/>
</dbReference>
<dbReference type="InterPro" id="IPR050130">
    <property type="entry name" value="ClpA_ClpB"/>
</dbReference>
<dbReference type="InterPro" id="IPR027417">
    <property type="entry name" value="P-loop_NTPase"/>
</dbReference>
<dbReference type="NCBIfam" id="TIGR02639">
    <property type="entry name" value="ClpA"/>
    <property type="match status" value="1"/>
</dbReference>
<dbReference type="NCBIfam" id="NF008263">
    <property type="entry name" value="PRK11034.1"/>
    <property type="match status" value="1"/>
</dbReference>
<dbReference type="PANTHER" id="PTHR11638">
    <property type="entry name" value="ATP-DEPENDENT CLP PROTEASE"/>
    <property type="match status" value="1"/>
</dbReference>
<dbReference type="PANTHER" id="PTHR11638:SF111">
    <property type="entry name" value="ATP-DEPENDENT CLP PROTEASE ATP-BINDING SUBUNIT CLPA"/>
    <property type="match status" value="1"/>
</dbReference>
<dbReference type="Pfam" id="PF00004">
    <property type="entry name" value="AAA"/>
    <property type="match status" value="1"/>
</dbReference>
<dbReference type="Pfam" id="PF07724">
    <property type="entry name" value="AAA_2"/>
    <property type="match status" value="1"/>
</dbReference>
<dbReference type="Pfam" id="PF17871">
    <property type="entry name" value="AAA_lid_9"/>
    <property type="match status" value="1"/>
</dbReference>
<dbReference type="Pfam" id="PF02861">
    <property type="entry name" value="Clp_N"/>
    <property type="match status" value="1"/>
</dbReference>
<dbReference type="Pfam" id="PF10431">
    <property type="entry name" value="ClpB_D2-small"/>
    <property type="match status" value="1"/>
</dbReference>
<dbReference type="PRINTS" id="PR00300">
    <property type="entry name" value="CLPPROTEASEA"/>
</dbReference>
<dbReference type="SMART" id="SM00382">
    <property type="entry name" value="AAA"/>
    <property type="match status" value="2"/>
</dbReference>
<dbReference type="SMART" id="SM01086">
    <property type="entry name" value="ClpB_D2-small"/>
    <property type="match status" value="1"/>
</dbReference>
<dbReference type="SUPFAM" id="SSF81923">
    <property type="entry name" value="Double Clp-N motif"/>
    <property type="match status" value="1"/>
</dbReference>
<dbReference type="SUPFAM" id="SSF52540">
    <property type="entry name" value="P-loop containing nucleoside triphosphate hydrolases"/>
    <property type="match status" value="2"/>
</dbReference>
<dbReference type="PROSITE" id="PS51903">
    <property type="entry name" value="CLP_R"/>
    <property type="match status" value="1"/>
</dbReference>
<dbReference type="PROSITE" id="PS00870">
    <property type="entry name" value="CLPAB_1"/>
    <property type="match status" value="1"/>
</dbReference>
<dbReference type="PROSITE" id="PS00871">
    <property type="entry name" value="CLPAB_2"/>
    <property type="match status" value="1"/>
</dbReference>
<comment type="function">
    <text>ATP-dependent specificity component of the ClpAP protease. It directs the protease to specific substrates. It has unfoldase activity. The primary function of the ClpA-ClpP complex appears to be the degradation of unfolded or abnormal proteins.</text>
</comment>
<comment type="subunit">
    <text evidence="4 5">Component of the ClpAP complex composed of six ClpA subunits assembled into a hexameric ring in the presence of ATP, and fourteen ClpP subunits arranged in two heptameric rings. Binds to ClpS.</text>
</comment>
<comment type="interaction">
    <interactant intactId="EBI-546140">
        <id>P0ABH9</id>
    </interactant>
    <interactant intactId="EBI-546740">
        <id>P0AEC5</id>
        <label>barA</label>
    </interactant>
    <organismsDiffer>false</organismsDiffer>
    <experiments>3</experiments>
</comment>
<comment type="interaction">
    <interactant intactId="EBI-546140">
        <id>P0ABH9</id>
    </interactant>
    <interactant intactId="EBI-370625">
        <id>P0A6G7</id>
        <label>clpP</label>
    </interactant>
    <organismsDiffer>false</organismsDiffer>
    <experiments>11</experiments>
</comment>
<comment type="interaction">
    <interactant intactId="EBI-546140">
        <id>P0ABH9</id>
    </interactant>
    <interactant intactId="EBI-561456">
        <id>P0A8Q6</id>
        <label>clpS</label>
    </interactant>
    <organismsDiffer>false</organismsDiffer>
    <experiments>13</experiments>
</comment>
<comment type="interaction">
    <interactant intactId="EBI-546140">
        <id>P0ABH9</id>
    </interactant>
    <interactant intactId="EBI-1113234">
        <id>P68646</id>
        <label>fixX</label>
    </interactant>
    <organismsDiffer>false</organismsDiffer>
    <experiments>2</experiments>
</comment>
<comment type="similarity">
    <text evidence="6">Belongs to the ClpA/ClpB family.</text>
</comment>
<name>CLPA_ECOLI</name>
<organism>
    <name type="scientific">Escherichia coli (strain K12)</name>
    <dbReference type="NCBI Taxonomy" id="83333"/>
    <lineage>
        <taxon>Bacteria</taxon>
        <taxon>Pseudomonadati</taxon>
        <taxon>Pseudomonadota</taxon>
        <taxon>Gammaproteobacteria</taxon>
        <taxon>Enterobacterales</taxon>
        <taxon>Enterobacteriaceae</taxon>
        <taxon>Escherichia</taxon>
    </lineage>
</organism>
<keyword id="KW-0002">3D-structure</keyword>
<keyword id="KW-0067">ATP-binding</keyword>
<keyword id="KW-0143">Chaperone</keyword>
<keyword id="KW-0903">Direct protein sequencing</keyword>
<keyword id="KW-0547">Nucleotide-binding</keyword>
<keyword id="KW-1185">Reference proteome</keyword>
<keyword id="KW-0677">Repeat</keyword>